<protein>
    <recommendedName>
        <fullName>Phenol-soluble modulin alpha 1 peptide</fullName>
    </recommendedName>
</protein>
<comment type="function">
    <text evidence="1">Peptide which can recruit, activate and subsequently lyse human neutrophils, thus eliminating the main cellular defense against infection.</text>
</comment>
<comment type="similarity">
    <text evidence="2">Belongs to the phenol-soluble modulin alpha peptides family.</text>
</comment>
<name>PSMA1_STAA1</name>
<evidence type="ECO:0000250" key="1">
    <source>
        <dbReference type="UniProtKB" id="A9JX05"/>
    </source>
</evidence>
<evidence type="ECO:0000305" key="2"/>
<organism>
    <name type="scientific">Staphylococcus aureus (strain Mu3 / ATCC 700698)</name>
    <dbReference type="NCBI Taxonomy" id="418127"/>
    <lineage>
        <taxon>Bacteria</taxon>
        <taxon>Bacillati</taxon>
        <taxon>Bacillota</taxon>
        <taxon>Bacilli</taxon>
        <taxon>Bacillales</taxon>
        <taxon>Staphylococcaceae</taxon>
        <taxon>Staphylococcus</taxon>
    </lineage>
</organism>
<reference key="1">
    <citation type="journal article" date="2008" name="Antimicrob. Agents Chemother.">
        <title>Mutated response regulator graR is responsible for phenotypic conversion of Staphylococcus aureus from heterogeneous vancomycin-intermediate resistance to vancomycin-intermediate resistance.</title>
        <authorList>
            <person name="Neoh H.-M."/>
            <person name="Cui L."/>
            <person name="Yuzawa H."/>
            <person name="Takeuchi F."/>
            <person name="Matsuo M."/>
            <person name="Hiramatsu K."/>
        </authorList>
    </citation>
    <scope>NUCLEOTIDE SEQUENCE [LARGE SCALE GENOMIC DNA]</scope>
    <source>
        <strain>Mu3 / ATCC 700698</strain>
    </source>
</reference>
<accession>P0C7X8</accession>
<gene>
    <name type="primary">psmA1</name>
    <name type="ordered locus">SAHV_0449.4</name>
</gene>
<dbReference type="EMBL" id="AP009324">
    <property type="status" value="NOT_ANNOTATED_CDS"/>
    <property type="molecule type" value="Genomic_DNA"/>
</dbReference>
<dbReference type="SMR" id="P0C7X8"/>
<dbReference type="GO" id="GO:0031640">
    <property type="term" value="P:killing of cells of another organism"/>
    <property type="evidence" value="ECO:0007669"/>
    <property type="project" value="UniProtKB-KW"/>
</dbReference>
<dbReference type="InterPro" id="IPR031429">
    <property type="entry name" value="PSM_alpha"/>
</dbReference>
<dbReference type="NCBIfam" id="NF033425">
    <property type="entry name" value="PSM_alpha_1_2"/>
    <property type="match status" value="1"/>
</dbReference>
<dbReference type="Pfam" id="PF17063">
    <property type="entry name" value="PSMalpha"/>
    <property type="match status" value="1"/>
</dbReference>
<proteinExistence type="inferred from homology"/>
<keyword id="KW-0204">Cytolysis</keyword>
<keyword id="KW-0843">Virulence</keyword>
<feature type="peptide" id="PRO_0000345029" description="Phenol-soluble modulin alpha 1 peptide">
    <location>
        <begin position="1"/>
        <end position="21"/>
    </location>
</feature>
<sequence length="21" mass="2260">MGIIAGIIKVIKSLIEQFTGK</sequence>